<name>SYGA_HELPH</name>
<comment type="catalytic activity">
    <reaction evidence="1">
        <text>tRNA(Gly) + glycine + ATP = glycyl-tRNA(Gly) + AMP + diphosphate</text>
        <dbReference type="Rhea" id="RHEA:16013"/>
        <dbReference type="Rhea" id="RHEA-COMP:9664"/>
        <dbReference type="Rhea" id="RHEA-COMP:9683"/>
        <dbReference type="ChEBI" id="CHEBI:30616"/>
        <dbReference type="ChEBI" id="CHEBI:33019"/>
        <dbReference type="ChEBI" id="CHEBI:57305"/>
        <dbReference type="ChEBI" id="CHEBI:78442"/>
        <dbReference type="ChEBI" id="CHEBI:78522"/>
        <dbReference type="ChEBI" id="CHEBI:456215"/>
        <dbReference type="EC" id="6.1.1.14"/>
    </reaction>
</comment>
<comment type="subunit">
    <text evidence="1">Tetramer of two alpha and two beta subunits.</text>
</comment>
<comment type="subcellular location">
    <subcellularLocation>
        <location evidence="1">Cytoplasm</location>
    </subcellularLocation>
</comment>
<comment type="similarity">
    <text evidence="1">Belongs to the class-II aminoacyl-tRNA synthetase family.</text>
</comment>
<gene>
    <name evidence="1" type="primary">glyQ</name>
    <name type="ordered locus">HPAG1_0944</name>
</gene>
<dbReference type="EC" id="6.1.1.14" evidence="1"/>
<dbReference type="EMBL" id="CP000241">
    <property type="protein sequence ID" value="ABF85011.1"/>
    <property type="molecule type" value="Genomic_DNA"/>
</dbReference>
<dbReference type="RefSeq" id="WP_001150956.1">
    <property type="nucleotide sequence ID" value="NC_008086.1"/>
</dbReference>
<dbReference type="SMR" id="Q1CSR1"/>
<dbReference type="KEGG" id="hpa:HPAG1_0944"/>
<dbReference type="HOGENOM" id="CLU_057066_1_0_7"/>
<dbReference type="GO" id="GO:0005829">
    <property type="term" value="C:cytosol"/>
    <property type="evidence" value="ECO:0007669"/>
    <property type="project" value="TreeGrafter"/>
</dbReference>
<dbReference type="GO" id="GO:0005524">
    <property type="term" value="F:ATP binding"/>
    <property type="evidence" value="ECO:0007669"/>
    <property type="project" value="UniProtKB-UniRule"/>
</dbReference>
<dbReference type="GO" id="GO:0004820">
    <property type="term" value="F:glycine-tRNA ligase activity"/>
    <property type="evidence" value="ECO:0007669"/>
    <property type="project" value="UniProtKB-UniRule"/>
</dbReference>
<dbReference type="GO" id="GO:0006426">
    <property type="term" value="P:glycyl-tRNA aminoacylation"/>
    <property type="evidence" value="ECO:0007669"/>
    <property type="project" value="UniProtKB-UniRule"/>
</dbReference>
<dbReference type="CDD" id="cd00733">
    <property type="entry name" value="GlyRS_alpha_core"/>
    <property type="match status" value="1"/>
</dbReference>
<dbReference type="FunFam" id="3.30.930.10:FF:000006">
    <property type="entry name" value="Glycine--tRNA ligase alpha subunit"/>
    <property type="match status" value="1"/>
</dbReference>
<dbReference type="Gene3D" id="3.30.930.10">
    <property type="entry name" value="Bira Bifunctional Protein, Domain 2"/>
    <property type="match status" value="1"/>
</dbReference>
<dbReference type="Gene3D" id="1.20.58.180">
    <property type="entry name" value="Class II aaRS and biotin synthetases, domain 2"/>
    <property type="match status" value="1"/>
</dbReference>
<dbReference type="HAMAP" id="MF_00254">
    <property type="entry name" value="Gly_tRNA_synth_alpha"/>
    <property type="match status" value="1"/>
</dbReference>
<dbReference type="InterPro" id="IPR045864">
    <property type="entry name" value="aa-tRNA-synth_II/BPL/LPL"/>
</dbReference>
<dbReference type="InterPro" id="IPR006194">
    <property type="entry name" value="Gly-tRNA-synth_heterodimer"/>
</dbReference>
<dbReference type="InterPro" id="IPR002310">
    <property type="entry name" value="Gly-tRNA_ligase_asu"/>
</dbReference>
<dbReference type="NCBIfam" id="TIGR00388">
    <property type="entry name" value="glyQ"/>
    <property type="match status" value="1"/>
</dbReference>
<dbReference type="NCBIfam" id="NF006827">
    <property type="entry name" value="PRK09348.1"/>
    <property type="match status" value="1"/>
</dbReference>
<dbReference type="PANTHER" id="PTHR30075:SF2">
    <property type="entry name" value="GLYCINE--TRNA LIGASE, CHLOROPLASTIC_MITOCHONDRIAL 2"/>
    <property type="match status" value="1"/>
</dbReference>
<dbReference type="PANTHER" id="PTHR30075">
    <property type="entry name" value="GLYCYL-TRNA SYNTHETASE"/>
    <property type="match status" value="1"/>
</dbReference>
<dbReference type="Pfam" id="PF02091">
    <property type="entry name" value="tRNA-synt_2e"/>
    <property type="match status" value="1"/>
</dbReference>
<dbReference type="PRINTS" id="PR01044">
    <property type="entry name" value="TRNASYNTHGA"/>
</dbReference>
<dbReference type="SUPFAM" id="SSF55681">
    <property type="entry name" value="Class II aaRS and biotin synthetases"/>
    <property type="match status" value="1"/>
</dbReference>
<dbReference type="PROSITE" id="PS50861">
    <property type="entry name" value="AA_TRNA_LIGASE_II_GLYAB"/>
    <property type="match status" value="1"/>
</dbReference>
<keyword id="KW-0030">Aminoacyl-tRNA synthetase</keyword>
<keyword id="KW-0067">ATP-binding</keyword>
<keyword id="KW-0963">Cytoplasm</keyword>
<keyword id="KW-0436">Ligase</keyword>
<keyword id="KW-0547">Nucleotide-binding</keyword>
<keyword id="KW-0648">Protein biosynthesis</keyword>
<sequence length="298" mass="34546">MQDFSSLLLKLQEYWKNQGCLVIQPYDIPAGAGTFHPATLLRSLDKKPWNVAYVAPSRRPTDGRYGENPNRLGSYYQFQVVIKPSPSNIQEMYLKSLEVLGINLNEHDIRFVEDNWESPTLGAWGLGWEVWLDGMEVTQFTYFQQVGGIPCSPIPVEITYGLERLAMYVQKVENILEIEWAKNNHDSVRYAQVHLESEYQFSKYHFEIASVRRLLEMFKNAQAEALHCLENKLPLPAYDFVMLCSHFFNILDARKAISVAERQNYILQIRDLAKGCAVLYKEQEKEREERLKNALTKA</sequence>
<organism>
    <name type="scientific">Helicobacter pylori (strain HPAG1)</name>
    <dbReference type="NCBI Taxonomy" id="357544"/>
    <lineage>
        <taxon>Bacteria</taxon>
        <taxon>Pseudomonadati</taxon>
        <taxon>Campylobacterota</taxon>
        <taxon>Epsilonproteobacteria</taxon>
        <taxon>Campylobacterales</taxon>
        <taxon>Helicobacteraceae</taxon>
        <taxon>Helicobacter</taxon>
    </lineage>
</organism>
<feature type="chain" id="PRO_1000047432" description="Glycine--tRNA ligase alpha subunit">
    <location>
        <begin position="1"/>
        <end position="298"/>
    </location>
</feature>
<protein>
    <recommendedName>
        <fullName evidence="1">Glycine--tRNA ligase alpha subunit</fullName>
        <ecNumber evidence="1">6.1.1.14</ecNumber>
    </recommendedName>
    <alternativeName>
        <fullName evidence="1">Glycyl-tRNA synthetase alpha subunit</fullName>
        <shortName evidence="1">GlyRS</shortName>
    </alternativeName>
</protein>
<proteinExistence type="inferred from homology"/>
<reference key="1">
    <citation type="journal article" date="2006" name="Proc. Natl. Acad. Sci. U.S.A.">
        <title>The complete genome sequence of a chronic atrophic gastritis Helicobacter pylori strain: evolution during disease progression.</title>
        <authorList>
            <person name="Oh J.D."/>
            <person name="Kling-Baeckhed H."/>
            <person name="Giannakis M."/>
            <person name="Xu J."/>
            <person name="Fulton R.S."/>
            <person name="Fulton L.A."/>
            <person name="Cordum H.S."/>
            <person name="Wang C."/>
            <person name="Elliott G."/>
            <person name="Edwards J."/>
            <person name="Mardis E.R."/>
            <person name="Engstrand L.G."/>
            <person name="Gordon J.I."/>
        </authorList>
    </citation>
    <scope>NUCLEOTIDE SEQUENCE [LARGE SCALE GENOMIC DNA]</scope>
    <source>
        <strain>HPAG1</strain>
    </source>
</reference>
<evidence type="ECO:0000255" key="1">
    <source>
        <dbReference type="HAMAP-Rule" id="MF_00254"/>
    </source>
</evidence>
<accession>Q1CSR1</accession>